<accession>Q5HNM4</accession>
<name>RL35_STAEQ</name>
<organism>
    <name type="scientific">Staphylococcus epidermidis (strain ATCC 35984 / DSM 28319 / BCRC 17069 / CCUG 31568 / BM 3577 / RP62A)</name>
    <dbReference type="NCBI Taxonomy" id="176279"/>
    <lineage>
        <taxon>Bacteria</taxon>
        <taxon>Bacillati</taxon>
        <taxon>Bacillota</taxon>
        <taxon>Bacilli</taxon>
        <taxon>Bacillales</taxon>
        <taxon>Staphylococcaceae</taxon>
        <taxon>Staphylococcus</taxon>
    </lineage>
</organism>
<sequence length="66" mass="7682">MPKMKTHRGAAKRVKRTGSGQLKRSRAFTSHLFANKNTKQKRQLRKAKLVSKSDMKRVKQLLAYKK</sequence>
<comment type="similarity">
    <text evidence="1">Belongs to the bacterial ribosomal protein bL35 family.</text>
</comment>
<evidence type="ECO:0000255" key="1">
    <source>
        <dbReference type="HAMAP-Rule" id="MF_00514"/>
    </source>
</evidence>
<evidence type="ECO:0000256" key="2">
    <source>
        <dbReference type="SAM" id="MobiDB-lite"/>
    </source>
</evidence>
<evidence type="ECO:0000305" key="3"/>
<protein>
    <recommendedName>
        <fullName evidence="1">Large ribosomal subunit protein bL35</fullName>
    </recommendedName>
    <alternativeName>
        <fullName evidence="3">50S ribosomal protein L35</fullName>
    </alternativeName>
</protein>
<gene>
    <name evidence="1" type="primary">rpmI</name>
    <name type="ordered locus">SERP1243</name>
</gene>
<keyword id="KW-1185">Reference proteome</keyword>
<keyword id="KW-0687">Ribonucleoprotein</keyword>
<keyword id="KW-0689">Ribosomal protein</keyword>
<dbReference type="EMBL" id="CP000029">
    <property type="protein sequence ID" value="AAW54608.1"/>
    <property type="molecule type" value="Genomic_DNA"/>
</dbReference>
<dbReference type="RefSeq" id="WP_001830767.1">
    <property type="nucleotide sequence ID" value="NC_002976.3"/>
</dbReference>
<dbReference type="SMR" id="Q5HNM4"/>
<dbReference type="STRING" id="176279.SERP1243"/>
<dbReference type="GeneID" id="93669309"/>
<dbReference type="KEGG" id="ser:SERP1243"/>
<dbReference type="eggNOG" id="COG0291">
    <property type="taxonomic scope" value="Bacteria"/>
</dbReference>
<dbReference type="HOGENOM" id="CLU_169643_3_0_9"/>
<dbReference type="Proteomes" id="UP000000531">
    <property type="component" value="Chromosome"/>
</dbReference>
<dbReference type="GO" id="GO:0022625">
    <property type="term" value="C:cytosolic large ribosomal subunit"/>
    <property type="evidence" value="ECO:0007669"/>
    <property type="project" value="TreeGrafter"/>
</dbReference>
<dbReference type="GO" id="GO:0003735">
    <property type="term" value="F:structural constituent of ribosome"/>
    <property type="evidence" value="ECO:0007669"/>
    <property type="project" value="InterPro"/>
</dbReference>
<dbReference type="GO" id="GO:0006412">
    <property type="term" value="P:translation"/>
    <property type="evidence" value="ECO:0007669"/>
    <property type="project" value="UniProtKB-UniRule"/>
</dbReference>
<dbReference type="FunFam" id="4.10.410.60:FF:000001">
    <property type="entry name" value="50S ribosomal protein L35"/>
    <property type="match status" value="1"/>
</dbReference>
<dbReference type="Gene3D" id="4.10.410.60">
    <property type="match status" value="1"/>
</dbReference>
<dbReference type="HAMAP" id="MF_00514">
    <property type="entry name" value="Ribosomal_bL35"/>
    <property type="match status" value="1"/>
</dbReference>
<dbReference type="InterPro" id="IPR001706">
    <property type="entry name" value="Ribosomal_bL35"/>
</dbReference>
<dbReference type="InterPro" id="IPR021137">
    <property type="entry name" value="Ribosomal_bL35-like"/>
</dbReference>
<dbReference type="InterPro" id="IPR018265">
    <property type="entry name" value="Ribosomal_bL35_CS"/>
</dbReference>
<dbReference type="InterPro" id="IPR037229">
    <property type="entry name" value="Ribosomal_bL35_sf"/>
</dbReference>
<dbReference type="NCBIfam" id="TIGR00001">
    <property type="entry name" value="rpmI_bact"/>
    <property type="match status" value="1"/>
</dbReference>
<dbReference type="PANTHER" id="PTHR33343">
    <property type="entry name" value="54S RIBOSOMAL PROTEIN BL35M"/>
    <property type="match status" value="1"/>
</dbReference>
<dbReference type="PANTHER" id="PTHR33343:SF1">
    <property type="entry name" value="LARGE RIBOSOMAL SUBUNIT PROTEIN BL35M"/>
    <property type="match status" value="1"/>
</dbReference>
<dbReference type="Pfam" id="PF01632">
    <property type="entry name" value="Ribosomal_L35p"/>
    <property type="match status" value="1"/>
</dbReference>
<dbReference type="PRINTS" id="PR00064">
    <property type="entry name" value="RIBOSOMALL35"/>
</dbReference>
<dbReference type="SUPFAM" id="SSF143034">
    <property type="entry name" value="L35p-like"/>
    <property type="match status" value="1"/>
</dbReference>
<dbReference type="PROSITE" id="PS00936">
    <property type="entry name" value="RIBOSOMAL_L35"/>
    <property type="match status" value="1"/>
</dbReference>
<feature type="chain" id="PRO_0000177424" description="Large ribosomal subunit protein bL35">
    <location>
        <begin position="1"/>
        <end position="66"/>
    </location>
</feature>
<feature type="region of interest" description="Disordered" evidence="2">
    <location>
        <begin position="1"/>
        <end position="28"/>
    </location>
</feature>
<feature type="compositionally biased region" description="Basic residues" evidence="2">
    <location>
        <begin position="1"/>
        <end position="16"/>
    </location>
</feature>
<proteinExistence type="inferred from homology"/>
<reference key="1">
    <citation type="journal article" date="2005" name="J. Bacteriol.">
        <title>Insights on evolution of virulence and resistance from the complete genome analysis of an early methicillin-resistant Staphylococcus aureus strain and a biofilm-producing methicillin-resistant Staphylococcus epidermidis strain.</title>
        <authorList>
            <person name="Gill S.R."/>
            <person name="Fouts D.E."/>
            <person name="Archer G.L."/>
            <person name="Mongodin E.F."/>
            <person name="DeBoy R.T."/>
            <person name="Ravel J."/>
            <person name="Paulsen I.T."/>
            <person name="Kolonay J.F."/>
            <person name="Brinkac L.M."/>
            <person name="Beanan M.J."/>
            <person name="Dodson R.J."/>
            <person name="Daugherty S.C."/>
            <person name="Madupu R."/>
            <person name="Angiuoli S.V."/>
            <person name="Durkin A.S."/>
            <person name="Haft D.H."/>
            <person name="Vamathevan J.J."/>
            <person name="Khouri H."/>
            <person name="Utterback T.R."/>
            <person name="Lee C."/>
            <person name="Dimitrov G."/>
            <person name="Jiang L."/>
            <person name="Qin H."/>
            <person name="Weidman J."/>
            <person name="Tran K."/>
            <person name="Kang K.H."/>
            <person name="Hance I.R."/>
            <person name="Nelson K.E."/>
            <person name="Fraser C.M."/>
        </authorList>
    </citation>
    <scope>NUCLEOTIDE SEQUENCE [LARGE SCALE GENOMIC DNA]</scope>
    <source>
        <strain>ATCC 35984 / DSM 28319 / BCRC 17069 / CCUG 31568 / BM 3577 / RP62A</strain>
    </source>
</reference>